<protein>
    <recommendedName>
        <fullName evidence="1">Dihydroorotase</fullName>
        <shortName evidence="1">DHOase</shortName>
        <ecNumber evidence="1">3.5.2.3</ecNumber>
    </recommendedName>
</protein>
<name>PYRC_CUPTR</name>
<reference key="1">
    <citation type="journal article" date="2008" name="Genome Res.">
        <title>Genome sequence of the beta-rhizobium Cupriavidus taiwanensis and comparative genomics of rhizobia.</title>
        <authorList>
            <person name="Amadou C."/>
            <person name="Pascal G."/>
            <person name="Mangenot S."/>
            <person name="Glew M."/>
            <person name="Bontemps C."/>
            <person name="Capela D."/>
            <person name="Carrere S."/>
            <person name="Cruveiller S."/>
            <person name="Dossat C."/>
            <person name="Lajus A."/>
            <person name="Marchetti M."/>
            <person name="Poinsot V."/>
            <person name="Rouy Z."/>
            <person name="Servin B."/>
            <person name="Saad M."/>
            <person name="Schenowitz C."/>
            <person name="Barbe V."/>
            <person name="Batut J."/>
            <person name="Medigue C."/>
            <person name="Masson-Boivin C."/>
        </authorList>
    </citation>
    <scope>NUCLEOTIDE SEQUENCE [LARGE SCALE GENOMIC DNA]</scope>
    <source>
        <strain>DSM 17343 / BCRC 17206 / CCUG 44338 / CIP 107171 / LMG 19424 / R1</strain>
    </source>
</reference>
<sequence length="344" mass="37579">MTQKLTITRPDDWHLHLRDGAALAAVLPDTARQFARAIVMPNLKPPVTTVAQAQAYRARILAALPAGMQFEPLMTLYLTDNTGPEEIAAARASGFVHGVKLYPAGATTNSDAGVTDIRRCYPALEAMQRAGLPLLVHGEVTDPAIDIFDREAVFIERVMTPLRRDMPELKVVFEHITTKDAAQYVRDASGPVGATITAHHLLYNRNAIFTGGIRPHYYCLPVLKRETHREALVAAATSGSERFFLGTDSAPHARGLKEHACGCAGCYTALHAMELYAEAFDAAGALDKLEAFASFNGPAFYGLPRNTGTLTLEREDWELPAELPYGDTTLVPLRGGETLRWKAR</sequence>
<accession>B2AH54</accession>
<feature type="chain" id="PRO_1000100039" description="Dihydroorotase">
    <location>
        <begin position="1"/>
        <end position="344"/>
    </location>
</feature>
<feature type="active site" evidence="1">
    <location>
        <position position="248"/>
    </location>
</feature>
<feature type="binding site" evidence="1">
    <location>
        <position position="14"/>
    </location>
    <ligand>
        <name>Zn(2+)</name>
        <dbReference type="ChEBI" id="CHEBI:29105"/>
        <label>1</label>
    </ligand>
</feature>
<feature type="binding site" evidence="1">
    <location>
        <begin position="16"/>
        <end position="18"/>
    </location>
    <ligand>
        <name>substrate</name>
    </ligand>
</feature>
<feature type="binding site" evidence="1">
    <location>
        <position position="16"/>
    </location>
    <ligand>
        <name>Zn(2+)</name>
        <dbReference type="ChEBI" id="CHEBI:29105"/>
        <label>1</label>
    </ligand>
</feature>
<feature type="binding site" evidence="1">
    <location>
        <position position="42"/>
    </location>
    <ligand>
        <name>substrate</name>
    </ligand>
</feature>
<feature type="binding site" description="via carbamate group" evidence="1">
    <location>
        <position position="100"/>
    </location>
    <ligand>
        <name>Zn(2+)</name>
        <dbReference type="ChEBI" id="CHEBI:29105"/>
        <label>1</label>
    </ligand>
</feature>
<feature type="binding site" description="via carbamate group" evidence="1">
    <location>
        <position position="100"/>
    </location>
    <ligand>
        <name>Zn(2+)</name>
        <dbReference type="ChEBI" id="CHEBI:29105"/>
        <label>2</label>
    </ligand>
</feature>
<feature type="binding site" evidence="1">
    <location>
        <position position="137"/>
    </location>
    <ligand>
        <name>substrate</name>
    </ligand>
</feature>
<feature type="binding site" evidence="1">
    <location>
        <position position="137"/>
    </location>
    <ligand>
        <name>Zn(2+)</name>
        <dbReference type="ChEBI" id="CHEBI:29105"/>
        <label>2</label>
    </ligand>
</feature>
<feature type="binding site" evidence="1">
    <location>
        <position position="175"/>
    </location>
    <ligand>
        <name>Zn(2+)</name>
        <dbReference type="ChEBI" id="CHEBI:29105"/>
        <label>2</label>
    </ligand>
</feature>
<feature type="binding site" evidence="1">
    <location>
        <position position="220"/>
    </location>
    <ligand>
        <name>substrate</name>
    </ligand>
</feature>
<feature type="binding site" evidence="1">
    <location>
        <position position="248"/>
    </location>
    <ligand>
        <name>Zn(2+)</name>
        <dbReference type="ChEBI" id="CHEBI:29105"/>
        <label>1</label>
    </ligand>
</feature>
<feature type="binding site" evidence="1">
    <location>
        <position position="252"/>
    </location>
    <ligand>
        <name>substrate</name>
    </ligand>
</feature>
<feature type="binding site" evidence="1">
    <location>
        <position position="264"/>
    </location>
    <ligand>
        <name>substrate</name>
    </ligand>
</feature>
<feature type="modified residue" description="N6-carboxylysine" evidence="1">
    <location>
        <position position="100"/>
    </location>
</feature>
<proteinExistence type="inferred from homology"/>
<dbReference type="EC" id="3.5.2.3" evidence="1"/>
<dbReference type="EMBL" id="CU633749">
    <property type="protein sequence ID" value="CAP63103.1"/>
    <property type="molecule type" value="Genomic_DNA"/>
</dbReference>
<dbReference type="RefSeq" id="WP_012351766.1">
    <property type="nucleotide sequence ID" value="NC_010528.1"/>
</dbReference>
<dbReference type="SMR" id="B2AH54"/>
<dbReference type="MEROPS" id="M38.A02"/>
<dbReference type="GeneID" id="29760352"/>
<dbReference type="KEGG" id="cti:RALTA_A0435"/>
<dbReference type="eggNOG" id="COG0418">
    <property type="taxonomic scope" value="Bacteria"/>
</dbReference>
<dbReference type="HOGENOM" id="CLU_041558_1_0_4"/>
<dbReference type="BioCyc" id="CTAI977880:RALTA_RS02125-MONOMER"/>
<dbReference type="UniPathway" id="UPA00070">
    <property type="reaction ID" value="UER00117"/>
</dbReference>
<dbReference type="Proteomes" id="UP000001692">
    <property type="component" value="Chromosome 1"/>
</dbReference>
<dbReference type="GO" id="GO:0005829">
    <property type="term" value="C:cytosol"/>
    <property type="evidence" value="ECO:0007669"/>
    <property type="project" value="TreeGrafter"/>
</dbReference>
<dbReference type="GO" id="GO:0004151">
    <property type="term" value="F:dihydroorotase activity"/>
    <property type="evidence" value="ECO:0007669"/>
    <property type="project" value="UniProtKB-UniRule"/>
</dbReference>
<dbReference type="GO" id="GO:0008270">
    <property type="term" value="F:zinc ion binding"/>
    <property type="evidence" value="ECO:0007669"/>
    <property type="project" value="UniProtKB-UniRule"/>
</dbReference>
<dbReference type="GO" id="GO:0006207">
    <property type="term" value="P:'de novo' pyrimidine nucleobase biosynthetic process"/>
    <property type="evidence" value="ECO:0007669"/>
    <property type="project" value="TreeGrafter"/>
</dbReference>
<dbReference type="GO" id="GO:0044205">
    <property type="term" value="P:'de novo' UMP biosynthetic process"/>
    <property type="evidence" value="ECO:0007669"/>
    <property type="project" value="UniProtKB-UniRule"/>
</dbReference>
<dbReference type="CDD" id="cd01294">
    <property type="entry name" value="DHOase"/>
    <property type="match status" value="1"/>
</dbReference>
<dbReference type="FunFam" id="3.20.20.140:FF:000006">
    <property type="entry name" value="Dihydroorotase"/>
    <property type="match status" value="1"/>
</dbReference>
<dbReference type="Gene3D" id="3.20.20.140">
    <property type="entry name" value="Metal-dependent hydrolases"/>
    <property type="match status" value="1"/>
</dbReference>
<dbReference type="HAMAP" id="MF_00219">
    <property type="entry name" value="PyrC_classII"/>
    <property type="match status" value="1"/>
</dbReference>
<dbReference type="InterPro" id="IPR006680">
    <property type="entry name" value="Amidohydro-rel"/>
</dbReference>
<dbReference type="InterPro" id="IPR004721">
    <property type="entry name" value="DHOdimr"/>
</dbReference>
<dbReference type="InterPro" id="IPR002195">
    <property type="entry name" value="Dihydroorotase_CS"/>
</dbReference>
<dbReference type="InterPro" id="IPR032466">
    <property type="entry name" value="Metal_Hydrolase"/>
</dbReference>
<dbReference type="NCBIfam" id="TIGR00856">
    <property type="entry name" value="pyrC_dimer"/>
    <property type="match status" value="1"/>
</dbReference>
<dbReference type="PANTHER" id="PTHR43137">
    <property type="entry name" value="DIHYDROOROTASE"/>
    <property type="match status" value="1"/>
</dbReference>
<dbReference type="PANTHER" id="PTHR43137:SF1">
    <property type="entry name" value="DIHYDROOROTASE"/>
    <property type="match status" value="1"/>
</dbReference>
<dbReference type="Pfam" id="PF01979">
    <property type="entry name" value="Amidohydro_1"/>
    <property type="match status" value="1"/>
</dbReference>
<dbReference type="PIRSF" id="PIRSF001237">
    <property type="entry name" value="DHOdimr"/>
    <property type="match status" value="1"/>
</dbReference>
<dbReference type="SUPFAM" id="SSF51556">
    <property type="entry name" value="Metallo-dependent hydrolases"/>
    <property type="match status" value="1"/>
</dbReference>
<dbReference type="PROSITE" id="PS00482">
    <property type="entry name" value="DIHYDROOROTASE_1"/>
    <property type="match status" value="1"/>
</dbReference>
<dbReference type="PROSITE" id="PS00483">
    <property type="entry name" value="DIHYDROOROTASE_2"/>
    <property type="match status" value="1"/>
</dbReference>
<comment type="function">
    <text evidence="1">Catalyzes the reversible cyclization of carbamoyl aspartate to dihydroorotate.</text>
</comment>
<comment type="catalytic activity">
    <reaction evidence="1">
        <text>(S)-dihydroorotate + H2O = N-carbamoyl-L-aspartate + H(+)</text>
        <dbReference type="Rhea" id="RHEA:24296"/>
        <dbReference type="ChEBI" id="CHEBI:15377"/>
        <dbReference type="ChEBI" id="CHEBI:15378"/>
        <dbReference type="ChEBI" id="CHEBI:30864"/>
        <dbReference type="ChEBI" id="CHEBI:32814"/>
        <dbReference type="EC" id="3.5.2.3"/>
    </reaction>
</comment>
<comment type="cofactor">
    <cofactor evidence="1">
        <name>Zn(2+)</name>
        <dbReference type="ChEBI" id="CHEBI:29105"/>
    </cofactor>
    <text evidence="1">Binds 2 Zn(2+) ions per subunit.</text>
</comment>
<comment type="pathway">
    <text evidence="1">Pyrimidine metabolism; UMP biosynthesis via de novo pathway; (S)-dihydroorotate from bicarbonate: step 3/3.</text>
</comment>
<comment type="subunit">
    <text evidence="1">Homodimer.</text>
</comment>
<comment type="similarity">
    <text evidence="1">Belongs to the metallo-dependent hydrolases superfamily. DHOase family. Class II DHOase subfamily.</text>
</comment>
<evidence type="ECO:0000255" key="1">
    <source>
        <dbReference type="HAMAP-Rule" id="MF_00219"/>
    </source>
</evidence>
<gene>
    <name evidence="1" type="primary">pyrC</name>
    <name type="ordered locus">RALTA_A0435</name>
</gene>
<keyword id="KW-0378">Hydrolase</keyword>
<keyword id="KW-0479">Metal-binding</keyword>
<keyword id="KW-0665">Pyrimidine biosynthesis</keyword>
<keyword id="KW-0862">Zinc</keyword>
<organism>
    <name type="scientific">Cupriavidus taiwanensis (strain DSM 17343 / BCRC 17206 / CCUG 44338 / CIP 107171 / LMG 19424 / R1)</name>
    <name type="common">Ralstonia taiwanensis (strain LMG 19424)</name>
    <dbReference type="NCBI Taxonomy" id="977880"/>
    <lineage>
        <taxon>Bacteria</taxon>
        <taxon>Pseudomonadati</taxon>
        <taxon>Pseudomonadota</taxon>
        <taxon>Betaproteobacteria</taxon>
        <taxon>Burkholderiales</taxon>
        <taxon>Burkholderiaceae</taxon>
        <taxon>Cupriavidus</taxon>
    </lineage>
</organism>